<organism>
    <name type="scientific">Listeria monocytogenes serovar 1/2a (strain ATCC BAA-679 / EGD-e)</name>
    <dbReference type="NCBI Taxonomy" id="169963"/>
    <lineage>
        <taxon>Bacteria</taxon>
        <taxon>Bacillati</taxon>
        <taxon>Bacillota</taxon>
        <taxon>Bacilli</taxon>
        <taxon>Bacillales</taxon>
        <taxon>Listeriaceae</taxon>
        <taxon>Listeria</taxon>
    </lineage>
</organism>
<gene>
    <name evidence="1" type="primary">rpsO</name>
    <name type="ordered locus">lmo1330</name>
</gene>
<sequence>MALTQERKNEIIAEYRVHDTDTGSPEVQIAVLTAEINSLNEHVRVHKKDHHSYRGLMKMVGHRRNLLTYLRKKDVQRYRELIKRLGLRR</sequence>
<proteinExistence type="evidence at protein level"/>
<dbReference type="EMBL" id="AL591978">
    <property type="protein sequence ID" value="CAC99408.1"/>
    <property type="molecule type" value="Genomic_DNA"/>
</dbReference>
<dbReference type="PIR" id="AB1241">
    <property type="entry name" value="AB1241"/>
</dbReference>
<dbReference type="PIR" id="AF1603">
    <property type="entry name" value="AF1603"/>
</dbReference>
<dbReference type="RefSeq" id="NP_464855.1">
    <property type="nucleotide sequence ID" value="NC_003210.1"/>
</dbReference>
<dbReference type="RefSeq" id="WP_003719603.1">
    <property type="nucleotide sequence ID" value="NZ_CP149495.1"/>
</dbReference>
<dbReference type="PDB" id="7NHN">
    <property type="method" value="EM"/>
    <property type="resolution" value="2.90 A"/>
    <property type="chains" value="p=1-89"/>
</dbReference>
<dbReference type="PDBsum" id="7NHN"/>
<dbReference type="EMDB" id="EMD-12334"/>
<dbReference type="SMR" id="Q92C24"/>
<dbReference type="STRING" id="169963.gene:17593987"/>
<dbReference type="PaxDb" id="169963-lmo1330"/>
<dbReference type="EnsemblBacteria" id="CAC99408">
    <property type="protein sequence ID" value="CAC99408"/>
    <property type="gene ID" value="CAC99408"/>
</dbReference>
<dbReference type="GeneID" id="93239206"/>
<dbReference type="GeneID" id="987711"/>
<dbReference type="KEGG" id="lmo:lmo1330"/>
<dbReference type="PATRIC" id="fig|169963.11.peg.1367"/>
<dbReference type="eggNOG" id="COG0184">
    <property type="taxonomic scope" value="Bacteria"/>
</dbReference>
<dbReference type="HOGENOM" id="CLU_148518_0_0_9"/>
<dbReference type="OrthoDB" id="9799262at2"/>
<dbReference type="PhylomeDB" id="Q92C24"/>
<dbReference type="BioCyc" id="LMON169963:LMO1330-MONOMER"/>
<dbReference type="Proteomes" id="UP000000817">
    <property type="component" value="Chromosome"/>
</dbReference>
<dbReference type="GO" id="GO:0022627">
    <property type="term" value="C:cytosolic small ribosomal subunit"/>
    <property type="evidence" value="ECO:0000318"/>
    <property type="project" value="GO_Central"/>
</dbReference>
<dbReference type="GO" id="GO:0019843">
    <property type="term" value="F:rRNA binding"/>
    <property type="evidence" value="ECO:0007669"/>
    <property type="project" value="UniProtKB-UniRule"/>
</dbReference>
<dbReference type="GO" id="GO:0003735">
    <property type="term" value="F:structural constituent of ribosome"/>
    <property type="evidence" value="ECO:0007669"/>
    <property type="project" value="InterPro"/>
</dbReference>
<dbReference type="GO" id="GO:0006412">
    <property type="term" value="P:translation"/>
    <property type="evidence" value="ECO:0007669"/>
    <property type="project" value="UniProtKB-UniRule"/>
</dbReference>
<dbReference type="CDD" id="cd00353">
    <property type="entry name" value="Ribosomal_S15p_S13e"/>
    <property type="match status" value="1"/>
</dbReference>
<dbReference type="FunFam" id="1.10.287.10:FF:000002">
    <property type="entry name" value="30S ribosomal protein S15"/>
    <property type="match status" value="1"/>
</dbReference>
<dbReference type="Gene3D" id="6.10.250.3130">
    <property type="match status" value="1"/>
</dbReference>
<dbReference type="Gene3D" id="1.10.287.10">
    <property type="entry name" value="S15/NS1, RNA-binding"/>
    <property type="match status" value="1"/>
</dbReference>
<dbReference type="HAMAP" id="MF_01343_B">
    <property type="entry name" value="Ribosomal_uS15_B"/>
    <property type="match status" value="1"/>
</dbReference>
<dbReference type="InterPro" id="IPR000589">
    <property type="entry name" value="Ribosomal_uS15"/>
</dbReference>
<dbReference type="InterPro" id="IPR005290">
    <property type="entry name" value="Ribosomal_uS15_bac-type"/>
</dbReference>
<dbReference type="InterPro" id="IPR009068">
    <property type="entry name" value="uS15_NS1_RNA-bd_sf"/>
</dbReference>
<dbReference type="NCBIfam" id="TIGR00952">
    <property type="entry name" value="S15_bact"/>
    <property type="match status" value="1"/>
</dbReference>
<dbReference type="PANTHER" id="PTHR23321">
    <property type="entry name" value="RIBOSOMAL PROTEIN S15, BACTERIAL AND ORGANELLAR"/>
    <property type="match status" value="1"/>
</dbReference>
<dbReference type="PANTHER" id="PTHR23321:SF26">
    <property type="entry name" value="SMALL RIBOSOMAL SUBUNIT PROTEIN US15M"/>
    <property type="match status" value="1"/>
</dbReference>
<dbReference type="Pfam" id="PF00312">
    <property type="entry name" value="Ribosomal_S15"/>
    <property type="match status" value="1"/>
</dbReference>
<dbReference type="SMART" id="SM01387">
    <property type="entry name" value="Ribosomal_S15"/>
    <property type="match status" value="1"/>
</dbReference>
<dbReference type="SUPFAM" id="SSF47060">
    <property type="entry name" value="S15/NS1 RNA-binding domain"/>
    <property type="match status" value="1"/>
</dbReference>
<dbReference type="PROSITE" id="PS00362">
    <property type="entry name" value="RIBOSOMAL_S15"/>
    <property type="match status" value="1"/>
</dbReference>
<reference key="1">
    <citation type="journal article" date="2001" name="Science">
        <title>Comparative genomics of Listeria species.</title>
        <authorList>
            <person name="Glaser P."/>
            <person name="Frangeul L."/>
            <person name="Buchrieser C."/>
            <person name="Rusniok C."/>
            <person name="Amend A."/>
            <person name="Baquero F."/>
            <person name="Berche P."/>
            <person name="Bloecker H."/>
            <person name="Brandt P."/>
            <person name="Chakraborty T."/>
            <person name="Charbit A."/>
            <person name="Chetouani F."/>
            <person name="Couve E."/>
            <person name="de Daruvar A."/>
            <person name="Dehoux P."/>
            <person name="Domann E."/>
            <person name="Dominguez-Bernal G."/>
            <person name="Duchaud E."/>
            <person name="Durant L."/>
            <person name="Dussurget O."/>
            <person name="Entian K.-D."/>
            <person name="Fsihi H."/>
            <person name="Garcia-del Portillo F."/>
            <person name="Garrido P."/>
            <person name="Gautier L."/>
            <person name="Goebel W."/>
            <person name="Gomez-Lopez N."/>
            <person name="Hain T."/>
            <person name="Hauf J."/>
            <person name="Jackson D."/>
            <person name="Jones L.-M."/>
            <person name="Kaerst U."/>
            <person name="Kreft J."/>
            <person name="Kuhn M."/>
            <person name="Kunst F."/>
            <person name="Kurapkat G."/>
            <person name="Madueno E."/>
            <person name="Maitournam A."/>
            <person name="Mata Vicente J."/>
            <person name="Ng E."/>
            <person name="Nedjari H."/>
            <person name="Nordsiek G."/>
            <person name="Novella S."/>
            <person name="de Pablos B."/>
            <person name="Perez-Diaz J.-C."/>
            <person name="Purcell R."/>
            <person name="Remmel B."/>
            <person name="Rose M."/>
            <person name="Schlueter T."/>
            <person name="Simoes N."/>
            <person name="Tierrez A."/>
            <person name="Vazquez-Boland J.-A."/>
            <person name="Voss H."/>
            <person name="Wehland J."/>
            <person name="Cossart P."/>
        </authorList>
    </citation>
    <scope>NUCLEOTIDE SEQUENCE [LARGE SCALE GENOMIC DNA]</scope>
    <source>
        <strain>ATCC BAA-679 / EGD-e</strain>
    </source>
</reference>
<name>RS15_LISMO</name>
<protein>
    <recommendedName>
        <fullName evidence="1">Small ribosomal subunit protein uS15</fullName>
    </recommendedName>
    <alternativeName>
        <fullName evidence="2">30S ribosomal protein S15</fullName>
    </alternativeName>
</protein>
<accession>Q92C24</accession>
<keyword id="KW-0002">3D-structure</keyword>
<keyword id="KW-1185">Reference proteome</keyword>
<keyword id="KW-0687">Ribonucleoprotein</keyword>
<keyword id="KW-0689">Ribosomal protein</keyword>
<keyword id="KW-0694">RNA-binding</keyword>
<keyword id="KW-0699">rRNA-binding</keyword>
<comment type="function">
    <text evidence="1">One of the primary rRNA binding proteins, it binds directly to 16S rRNA where it helps nucleate assembly of the platform of the 30S subunit by binding and bridging several RNA helices of the 16S rRNA.</text>
</comment>
<comment type="function">
    <text evidence="1">Forms an intersubunit bridge (bridge B4) with the 23S rRNA of the 50S subunit in the ribosome.</text>
</comment>
<comment type="subunit">
    <text evidence="1">Part of the 30S ribosomal subunit. Forms a bridge to the 50S subunit in the 70S ribosome, contacting the 23S rRNA.</text>
</comment>
<comment type="similarity">
    <text evidence="1">Belongs to the universal ribosomal protein uS15 family.</text>
</comment>
<evidence type="ECO:0000255" key="1">
    <source>
        <dbReference type="HAMAP-Rule" id="MF_01343"/>
    </source>
</evidence>
<evidence type="ECO:0000305" key="2"/>
<feature type="chain" id="PRO_0000115465" description="Small ribosomal subunit protein uS15">
    <location>
        <begin position="1"/>
        <end position="89"/>
    </location>
</feature>